<name>PDXB_VIBCH</name>
<sequence length="381" mass="41865">MKILIDENMPYAQALFSQLGEVILKPGRTLTADDLIDVDALMIRSVTKVNDALLAKANRLKFVGTATAGMDHVDQALLRERGIFFTAAPGCNKVGVAEYVFSVLMVLAQQQGFSVFDKTVGIIGAGQVGSYLAKCLSGIGMKVLLNDPPKQAQGDEREFTELETLLKQADVITLHTPITRGGEWPTHHLIDAAILEQLRSDQILINAARGPVVDNAALKARLQQGDGFTAVLDVFEFEPQVDMELLPLLAFATPHIAGYGLEGKARGTTMIFNSYCEFLGSAHCANPASLLPKAPVPKVYLERAWDEETLRTLTQIIYDVRKDDAQFRREIHQPGAFDLMRKHYWDRREYSAVTLAGGADCHLAPLAKLGFQVEVCDEPTI</sequence>
<dbReference type="EC" id="1.1.1.290" evidence="1"/>
<dbReference type="EMBL" id="AE003852">
    <property type="protein sequence ID" value="AAF95254.1"/>
    <property type="status" value="ALT_INIT"/>
    <property type="molecule type" value="Genomic_DNA"/>
</dbReference>
<dbReference type="PIR" id="C82118">
    <property type="entry name" value="C82118"/>
</dbReference>
<dbReference type="RefSeq" id="NP_231740.1">
    <property type="nucleotide sequence ID" value="NC_002505.1"/>
</dbReference>
<dbReference type="RefSeq" id="WP_000697483.1">
    <property type="nucleotide sequence ID" value="NZ_LT906614.1"/>
</dbReference>
<dbReference type="PDB" id="5DT9">
    <property type="method" value="X-ray"/>
    <property type="resolution" value="2.66 A"/>
    <property type="chains" value="A=1-381"/>
</dbReference>
<dbReference type="PDBsum" id="5DT9"/>
<dbReference type="SMR" id="Q9KQ92"/>
<dbReference type="STRING" id="243277.VC_2108"/>
<dbReference type="DNASU" id="2613364"/>
<dbReference type="EnsemblBacteria" id="AAF95254">
    <property type="protein sequence ID" value="AAF95254"/>
    <property type="gene ID" value="VC_2108"/>
</dbReference>
<dbReference type="KEGG" id="vch:VC_2108"/>
<dbReference type="PATRIC" id="fig|243277.26.peg.2014"/>
<dbReference type="eggNOG" id="COG0111">
    <property type="taxonomic scope" value="Bacteria"/>
</dbReference>
<dbReference type="HOGENOM" id="CLU_019796_4_0_6"/>
<dbReference type="UniPathway" id="UPA00244">
    <property type="reaction ID" value="UER00310"/>
</dbReference>
<dbReference type="Proteomes" id="UP000000584">
    <property type="component" value="Chromosome 1"/>
</dbReference>
<dbReference type="GO" id="GO:0005829">
    <property type="term" value="C:cytosol"/>
    <property type="evidence" value="ECO:0000318"/>
    <property type="project" value="GO_Central"/>
</dbReference>
<dbReference type="GO" id="GO:0033711">
    <property type="term" value="F:4-phosphoerythronate dehydrogenase activity"/>
    <property type="evidence" value="ECO:0000318"/>
    <property type="project" value="GO_Central"/>
</dbReference>
<dbReference type="GO" id="GO:0051287">
    <property type="term" value="F:NAD binding"/>
    <property type="evidence" value="ECO:0007669"/>
    <property type="project" value="InterPro"/>
</dbReference>
<dbReference type="GO" id="GO:0046983">
    <property type="term" value="F:protein dimerization activity"/>
    <property type="evidence" value="ECO:0007669"/>
    <property type="project" value="InterPro"/>
</dbReference>
<dbReference type="GO" id="GO:0036001">
    <property type="term" value="P:'de novo' pyridoxal 5'-phosphate biosynthetic process"/>
    <property type="evidence" value="ECO:0000318"/>
    <property type="project" value="GO_Central"/>
</dbReference>
<dbReference type="GO" id="GO:0008615">
    <property type="term" value="P:pyridoxine biosynthetic process"/>
    <property type="evidence" value="ECO:0000318"/>
    <property type="project" value="GO_Central"/>
</dbReference>
<dbReference type="CDD" id="cd12158">
    <property type="entry name" value="ErythrP_dh"/>
    <property type="match status" value="1"/>
</dbReference>
<dbReference type="FunFam" id="3.40.50.720:FF:000093">
    <property type="entry name" value="Erythronate-4-phosphate dehydrogenase"/>
    <property type="match status" value="1"/>
</dbReference>
<dbReference type="Gene3D" id="3.30.1370.170">
    <property type="match status" value="1"/>
</dbReference>
<dbReference type="Gene3D" id="3.40.50.720">
    <property type="entry name" value="NAD(P)-binding Rossmann-like Domain"/>
    <property type="match status" value="2"/>
</dbReference>
<dbReference type="HAMAP" id="MF_01825">
    <property type="entry name" value="PdxB"/>
    <property type="match status" value="1"/>
</dbReference>
<dbReference type="InterPro" id="IPR050223">
    <property type="entry name" value="D-isomer_2-hydroxyacid_DH"/>
</dbReference>
<dbReference type="InterPro" id="IPR006139">
    <property type="entry name" value="D-isomer_2_OHA_DH_cat_dom"/>
</dbReference>
<dbReference type="InterPro" id="IPR029753">
    <property type="entry name" value="D-isomer_DH_CS"/>
</dbReference>
<dbReference type="InterPro" id="IPR006140">
    <property type="entry name" value="D-isomer_DH_NAD-bd"/>
</dbReference>
<dbReference type="InterPro" id="IPR020921">
    <property type="entry name" value="Erythronate-4-P_DHase"/>
</dbReference>
<dbReference type="InterPro" id="IPR024531">
    <property type="entry name" value="Erythronate-4-P_DHase_dimer"/>
</dbReference>
<dbReference type="InterPro" id="IPR036291">
    <property type="entry name" value="NAD(P)-bd_dom_sf"/>
</dbReference>
<dbReference type="InterPro" id="IPR038251">
    <property type="entry name" value="PdxB_dimer_sf"/>
</dbReference>
<dbReference type="PANTHER" id="PTHR10996:SF178">
    <property type="entry name" value="2-HYDROXYACID DEHYDROGENASE YGL185C-RELATED"/>
    <property type="match status" value="1"/>
</dbReference>
<dbReference type="PANTHER" id="PTHR10996">
    <property type="entry name" value="2-HYDROXYACID DEHYDROGENASE-RELATED"/>
    <property type="match status" value="1"/>
</dbReference>
<dbReference type="Pfam" id="PF00389">
    <property type="entry name" value="2-Hacid_dh"/>
    <property type="match status" value="1"/>
</dbReference>
<dbReference type="Pfam" id="PF02826">
    <property type="entry name" value="2-Hacid_dh_C"/>
    <property type="match status" value="1"/>
</dbReference>
<dbReference type="Pfam" id="PF11890">
    <property type="entry name" value="DUF3410"/>
    <property type="match status" value="1"/>
</dbReference>
<dbReference type="SUPFAM" id="SSF52283">
    <property type="entry name" value="Formate/glycerate dehydrogenase catalytic domain-like"/>
    <property type="match status" value="1"/>
</dbReference>
<dbReference type="SUPFAM" id="SSF51735">
    <property type="entry name" value="NAD(P)-binding Rossmann-fold domains"/>
    <property type="match status" value="1"/>
</dbReference>
<dbReference type="PROSITE" id="PS00671">
    <property type="entry name" value="D_2_HYDROXYACID_DH_3"/>
    <property type="match status" value="1"/>
</dbReference>
<reference key="1">
    <citation type="journal article" date="2000" name="Nature">
        <title>DNA sequence of both chromosomes of the cholera pathogen Vibrio cholerae.</title>
        <authorList>
            <person name="Heidelberg J.F."/>
            <person name="Eisen J.A."/>
            <person name="Nelson W.C."/>
            <person name="Clayton R.A."/>
            <person name="Gwinn M.L."/>
            <person name="Dodson R.J."/>
            <person name="Haft D.H."/>
            <person name="Hickey E.K."/>
            <person name="Peterson J.D."/>
            <person name="Umayam L.A."/>
            <person name="Gill S.R."/>
            <person name="Nelson K.E."/>
            <person name="Read T.D."/>
            <person name="Tettelin H."/>
            <person name="Richardson D.L."/>
            <person name="Ermolaeva M.D."/>
            <person name="Vamathevan J.J."/>
            <person name="Bass S."/>
            <person name="Qin H."/>
            <person name="Dragoi I."/>
            <person name="Sellers P."/>
            <person name="McDonald L.A."/>
            <person name="Utterback T.R."/>
            <person name="Fleischmann R.D."/>
            <person name="Nierman W.C."/>
            <person name="White O."/>
            <person name="Salzberg S.L."/>
            <person name="Smith H.O."/>
            <person name="Colwell R.R."/>
            <person name="Mekalanos J.J."/>
            <person name="Venter J.C."/>
            <person name="Fraser C.M."/>
        </authorList>
    </citation>
    <scope>NUCLEOTIDE SEQUENCE [LARGE SCALE GENOMIC DNA]</scope>
    <source>
        <strain>ATCC 39315 / El Tor Inaba N16961</strain>
    </source>
</reference>
<feature type="chain" id="PRO_0000075991" description="Erythronate-4-phosphate dehydrogenase">
    <location>
        <begin position="1"/>
        <end position="381"/>
    </location>
</feature>
<feature type="active site" evidence="1">
    <location>
        <position position="209"/>
    </location>
</feature>
<feature type="active site" evidence="1">
    <location>
        <position position="238"/>
    </location>
</feature>
<feature type="active site" description="Proton donor" evidence="1">
    <location>
        <position position="255"/>
    </location>
</feature>
<feature type="binding site" evidence="1">
    <location>
        <position position="45"/>
    </location>
    <ligand>
        <name>substrate</name>
    </ligand>
</feature>
<feature type="binding site" evidence="1">
    <location>
        <position position="67"/>
    </location>
    <ligand>
        <name>substrate</name>
    </ligand>
</feature>
<feature type="binding site" evidence="1">
    <location>
        <begin position="127"/>
        <end position="128"/>
    </location>
    <ligand>
        <name>NAD(+)</name>
        <dbReference type="ChEBI" id="CHEBI:57540"/>
    </ligand>
</feature>
<feature type="binding site" evidence="1">
    <location>
        <position position="147"/>
    </location>
    <ligand>
        <name>NAD(+)</name>
        <dbReference type="ChEBI" id="CHEBI:57540"/>
    </ligand>
</feature>
<feature type="binding site" evidence="1">
    <location>
        <position position="176"/>
    </location>
    <ligand>
        <name>NAD(+)</name>
        <dbReference type="ChEBI" id="CHEBI:57540"/>
    </ligand>
</feature>
<feature type="binding site" evidence="1">
    <location>
        <position position="233"/>
    </location>
    <ligand>
        <name>NAD(+)</name>
        <dbReference type="ChEBI" id="CHEBI:57540"/>
    </ligand>
</feature>
<feature type="binding site" evidence="1">
    <location>
        <position position="258"/>
    </location>
    <ligand>
        <name>NAD(+)</name>
        <dbReference type="ChEBI" id="CHEBI:57540"/>
    </ligand>
</feature>
<feature type="binding site" evidence="1">
    <location>
        <position position="259"/>
    </location>
    <ligand>
        <name>substrate</name>
    </ligand>
</feature>
<feature type="strand" evidence="3">
    <location>
        <begin position="1"/>
        <end position="6"/>
    </location>
</feature>
<feature type="helix" evidence="3">
    <location>
        <begin position="12"/>
        <end position="16"/>
    </location>
</feature>
<feature type="turn" evidence="3">
    <location>
        <begin position="17"/>
        <end position="19"/>
    </location>
</feature>
<feature type="strand" evidence="3">
    <location>
        <begin position="20"/>
        <end position="25"/>
    </location>
</feature>
<feature type="helix" evidence="3">
    <location>
        <begin position="27"/>
        <end position="29"/>
    </location>
</feature>
<feature type="helix" evidence="3">
    <location>
        <begin position="32"/>
        <end position="35"/>
    </location>
</feature>
<feature type="strand" evidence="3">
    <location>
        <begin position="39"/>
        <end position="43"/>
    </location>
</feature>
<feature type="strand" evidence="3">
    <location>
        <begin position="45"/>
        <end position="47"/>
    </location>
</feature>
<feature type="turn" evidence="3">
    <location>
        <begin position="51"/>
        <end position="56"/>
    </location>
</feature>
<feature type="strand" evidence="3">
    <location>
        <begin position="62"/>
        <end position="68"/>
    </location>
</feature>
<feature type="helix" evidence="3">
    <location>
        <begin position="75"/>
        <end position="80"/>
    </location>
</feature>
<feature type="strand" evidence="3">
    <location>
        <begin position="84"/>
        <end position="86"/>
    </location>
</feature>
<feature type="turn" evidence="3">
    <location>
        <begin position="89"/>
        <end position="92"/>
    </location>
</feature>
<feature type="helix" evidence="3">
    <location>
        <begin position="93"/>
        <end position="111"/>
    </location>
</feature>
<feature type="helix" evidence="3">
    <location>
        <begin position="115"/>
        <end position="117"/>
    </location>
</feature>
<feature type="strand" evidence="3">
    <location>
        <begin position="120"/>
        <end position="123"/>
    </location>
</feature>
<feature type="helix" evidence="3">
    <location>
        <begin position="127"/>
        <end position="138"/>
    </location>
</feature>
<feature type="strand" evidence="3">
    <location>
        <begin position="143"/>
        <end position="146"/>
    </location>
</feature>
<feature type="helix" evidence="3">
    <location>
        <begin position="148"/>
        <end position="153"/>
    </location>
</feature>
<feature type="helix" evidence="3">
    <location>
        <begin position="162"/>
        <end position="168"/>
    </location>
</feature>
<feature type="strand" evidence="3">
    <location>
        <begin position="170"/>
        <end position="174"/>
    </location>
</feature>
<feature type="strand" evidence="3">
    <location>
        <begin position="180"/>
        <end position="184"/>
    </location>
</feature>
<feature type="helix" evidence="3">
    <location>
        <begin position="192"/>
        <end position="195"/>
    </location>
</feature>
<feature type="strand" evidence="3">
    <location>
        <begin position="203"/>
        <end position="206"/>
    </location>
</feature>
<feature type="helix" evidence="3">
    <location>
        <begin position="210"/>
        <end position="212"/>
    </location>
</feature>
<feature type="helix" evidence="3">
    <location>
        <begin position="215"/>
        <end position="222"/>
    </location>
</feature>
<feature type="strand" evidence="3">
    <location>
        <begin position="229"/>
        <end position="234"/>
    </location>
</feature>
<feature type="turn" evidence="3">
    <location>
        <begin position="243"/>
        <end position="245"/>
    </location>
</feature>
<feature type="helix" evidence="3">
    <location>
        <begin position="246"/>
        <end position="248"/>
    </location>
</feature>
<feature type="strand" evidence="3">
    <location>
        <begin position="249"/>
        <end position="252"/>
    </location>
</feature>
<feature type="helix" evidence="3">
    <location>
        <begin position="261"/>
        <end position="279"/>
    </location>
</feature>
<feature type="helix" evidence="3">
    <location>
        <begin position="287"/>
        <end position="290"/>
    </location>
</feature>
<feature type="strand" evidence="3">
    <location>
        <begin position="298"/>
        <end position="300"/>
    </location>
</feature>
<feature type="helix" evidence="3">
    <location>
        <begin position="307"/>
        <end position="317"/>
    </location>
</feature>
<feature type="helix" evidence="3">
    <location>
        <begin position="320"/>
        <end position="330"/>
    </location>
</feature>
<feature type="helix" evidence="3">
    <location>
        <begin position="336"/>
        <end position="342"/>
    </location>
</feature>
<feature type="helix" evidence="3">
    <location>
        <begin position="350"/>
        <end position="352"/>
    </location>
</feature>
<feature type="strand" evidence="3">
    <location>
        <begin position="353"/>
        <end position="357"/>
    </location>
</feature>
<feature type="helix" evidence="3">
    <location>
        <begin position="364"/>
        <end position="369"/>
    </location>
</feature>
<feature type="strand" evidence="3">
    <location>
        <begin position="372"/>
        <end position="375"/>
    </location>
</feature>
<accession>Q9KQ92</accession>
<evidence type="ECO:0000255" key="1">
    <source>
        <dbReference type="HAMAP-Rule" id="MF_01825"/>
    </source>
</evidence>
<evidence type="ECO:0000305" key="2"/>
<evidence type="ECO:0007829" key="3">
    <source>
        <dbReference type="PDB" id="5DT9"/>
    </source>
</evidence>
<comment type="function">
    <text evidence="1">Catalyzes the oxidation of erythronate-4-phosphate to 3-hydroxy-2-oxo-4-phosphonooxybutanoate.</text>
</comment>
<comment type="catalytic activity">
    <reaction evidence="1">
        <text>4-phospho-D-erythronate + NAD(+) = (R)-3-hydroxy-2-oxo-4-phosphooxybutanoate + NADH + H(+)</text>
        <dbReference type="Rhea" id="RHEA:18829"/>
        <dbReference type="ChEBI" id="CHEBI:15378"/>
        <dbReference type="ChEBI" id="CHEBI:57540"/>
        <dbReference type="ChEBI" id="CHEBI:57945"/>
        <dbReference type="ChEBI" id="CHEBI:58538"/>
        <dbReference type="ChEBI" id="CHEBI:58766"/>
        <dbReference type="EC" id="1.1.1.290"/>
    </reaction>
</comment>
<comment type="pathway">
    <text evidence="1">Cofactor biosynthesis; pyridoxine 5'-phosphate biosynthesis; pyridoxine 5'-phosphate from D-erythrose 4-phosphate: step 2/5.</text>
</comment>
<comment type="subunit">
    <text evidence="1">Homodimer.</text>
</comment>
<comment type="subcellular location">
    <subcellularLocation>
        <location evidence="1">Cytoplasm</location>
    </subcellularLocation>
</comment>
<comment type="similarity">
    <text evidence="1">Belongs to the D-isomer specific 2-hydroxyacid dehydrogenase family. PdxB subfamily.</text>
</comment>
<comment type="sequence caution" evidence="2">
    <conflict type="erroneous initiation">
        <sequence resource="EMBL-CDS" id="AAF95254"/>
    </conflict>
</comment>
<protein>
    <recommendedName>
        <fullName evidence="1">Erythronate-4-phosphate dehydrogenase</fullName>
        <ecNumber evidence="1">1.1.1.290</ecNumber>
    </recommendedName>
</protein>
<organism>
    <name type="scientific">Vibrio cholerae serotype O1 (strain ATCC 39315 / El Tor Inaba N16961)</name>
    <dbReference type="NCBI Taxonomy" id="243277"/>
    <lineage>
        <taxon>Bacteria</taxon>
        <taxon>Pseudomonadati</taxon>
        <taxon>Pseudomonadota</taxon>
        <taxon>Gammaproteobacteria</taxon>
        <taxon>Vibrionales</taxon>
        <taxon>Vibrionaceae</taxon>
        <taxon>Vibrio</taxon>
    </lineage>
</organism>
<proteinExistence type="evidence at protein level"/>
<gene>
    <name evidence="1" type="primary">pdxB</name>
    <name type="ordered locus">VC_2108</name>
</gene>
<keyword id="KW-0002">3D-structure</keyword>
<keyword id="KW-0963">Cytoplasm</keyword>
<keyword id="KW-0520">NAD</keyword>
<keyword id="KW-0560">Oxidoreductase</keyword>
<keyword id="KW-0664">Pyridoxine biosynthesis</keyword>
<keyword id="KW-1185">Reference proteome</keyword>